<proteinExistence type="inferred from homology"/>
<sequence length="140" mass="15506">MSRTVMAFDYGTKSIGSAIGQEITGTASPLKAFKANDGIPNWDEIEKQIKEWQPNLLIVGLPTDLHGKDLDTITPRAKKFAQRLHGRFGLPVELHDERLSTTEARAELFAMGGYKALSKGNVDCQSAVIILESWFESQWG</sequence>
<protein>
    <recommendedName>
        <fullName evidence="1">Putative pre-16S rRNA nuclease</fullName>
        <ecNumber evidence="1">3.1.-.-</ecNumber>
    </recommendedName>
</protein>
<evidence type="ECO:0000255" key="1">
    <source>
        <dbReference type="HAMAP-Rule" id="MF_00651"/>
    </source>
</evidence>
<name>YQGF_VIBCH</name>
<organism>
    <name type="scientific">Vibrio cholerae serotype O1 (strain ATCC 39315 / El Tor Inaba N16961)</name>
    <dbReference type="NCBI Taxonomy" id="243277"/>
    <lineage>
        <taxon>Bacteria</taxon>
        <taxon>Pseudomonadati</taxon>
        <taxon>Pseudomonadota</taxon>
        <taxon>Gammaproteobacteria</taxon>
        <taxon>Vibrionales</taxon>
        <taxon>Vibrionaceae</taxon>
        <taxon>Vibrio</taxon>
    </lineage>
</organism>
<reference key="1">
    <citation type="journal article" date="2000" name="Nature">
        <title>DNA sequence of both chromosomes of the cholera pathogen Vibrio cholerae.</title>
        <authorList>
            <person name="Heidelberg J.F."/>
            <person name="Eisen J.A."/>
            <person name="Nelson W.C."/>
            <person name="Clayton R.A."/>
            <person name="Gwinn M.L."/>
            <person name="Dodson R.J."/>
            <person name="Haft D.H."/>
            <person name="Hickey E.K."/>
            <person name="Peterson J.D."/>
            <person name="Umayam L.A."/>
            <person name="Gill S.R."/>
            <person name="Nelson K.E."/>
            <person name="Read T.D."/>
            <person name="Tettelin H."/>
            <person name="Richardson D.L."/>
            <person name="Ermolaeva M.D."/>
            <person name="Vamathevan J.J."/>
            <person name="Bass S."/>
            <person name="Qin H."/>
            <person name="Dragoi I."/>
            <person name="Sellers P."/>
            <person name="McDonald L.A."/>
            <person name="Utterback T.R."/>
            <person name="Fleischmann R.D."/>
            <person name="Nierman W.C."/>
            <person name="White O."/>
            <person name="Salzberg S.L."/>
            <person name="Smith H.O."/>
            <person name="Colwell R.R."/>
            <person name="Mekalanos J.J."/>
            <person name="Venter J.C."/>
            <person name="Fraser C.M."/>
        </authorList>
    </citation>
    <scope>NUCLEOTIDE SEQUENCE [LARGE SCALE GENOMIC DNA]</scope>
    <source>
        <strain>ATCC 39315 / El Tor Inaba N16961</strain>
    </source>
</reference>
<gene>
    <name type="ordered locus">VC_0466</name>
</gene>
<accession>Q9KUP9</accession>
<keyword id="KW-0963">Cytoplasm</keyword>
<keyword id="KW-0378">Hydrolase</keyword>
<keyword id="KW-0540">Nuclease</keyword>
<keyword id="KW-1185">Reference proteome</keyword>
<keyword id="KW-0690">Ribosome biogenesis</keyword>
<feature type="chain" id="PRO_0000172169" description="Putative pre-16S rRNA nuclease">
    <location>
        <begin position="1"/>
        <end position="140"/>
    </location>
</feature>
<dbReference type="EC" id="3.1.-.-" evidence="1"/>
<dbReference type="EMBL" id="AE003852">
    <property type="protein sequence ID" value="AAF93639.1"/>
    <property type="molecule type" value="Genomic_DNA"/>
</dbReference>
<dbReference type="PIR" id="G82318">
    <property type="entry name" value="G82318"/>
</dbReference>
<dbReference type="RefSeq" id="NP_230120.1">
    <property type="nucleotide sequence ID" value="NC_002505.1"/>
</dbReference>
<dbReference type="SMR" id="Q9KUP9"/>
<dbReference type="STRING" id="243277.VC_0466"/>
<dbReference type="DNASU" id="2615128"/>
<dbReference type="EnsemblBacteria" id="AAF93639">
    <property type="protein sequence ID" value="AAF93639"/>
    <property type="gene ID" value="VC_0466"/>
</dbReference>
<dbReference type="KEGG" id="vch:VC_0466"/>
<dbReference type="PATRIC" id="fig|243277.26.peg.439"/>
<dbReference type="eggNOG" id="COG0816">
    <property type="taxonomic scope" value="Bacteria"/>
</dbReference>
<dbReference type="HOGENOM" id="CLU_098240_3_0_6"/>
<dbReference type="Proteomes" id="UP000000584">
    <property type="component" value="Chromosome 1"/>
</dbReference>
<dbReference type="GO" id="GO:0005737">
    <property type="term" value="C:cytoplasm"/>
    <property type="evidence" value="ECO:0007669"/>
    <property type="project" value="UniProtKB-SubCell"/>
</dbReference>
<dbReference type="GO" id="GO:0004518">
    <property type="term" value="F:nuclease activity"/>
    <property type="evidence" value="ECO:0007669"/>
    <property type="project" value="UniProtKB-KW"/>
</dbReference>
<dbReference type="GO" id="GO:0000967">
    <property type="term" value="P:rRNA 5'-end processing"/>
    <property type="evidence" value="ECO:0000318"/>
    <property type="project" value="GO_Central"/>
</dbReference>
<dbReference type="CDD" id="cd16964">
    <property type="entry name" value="YqgF"/>
    <property type="match status" value="1"/>
</dbReference>
<dbReference type="FunFam" id="3.30.420.140:FF:000002">
    <property type="entry name" value="Putative pre-16S rRNA nuclease"/>
    <property type="match status" value="1"/>
</dbReference>
<dbReference type="Gene3D" id="3.30.420.140">
    <property type="entry name" value="YqgF/RNase H-like domain"/>
    <property type="match status" value="1"/>
</dbReference>
<dbReference type="HAMAP" id="MF_00651">
    <property type="entry name" value="Nuclease_YqgF"/>
    <property type="match status" value="1"/>
</dbReference>
<dbReference type="InterPro" id="IPR012337">
    <property type="entry name" value="RNaseH-like_sf"/>
</dbReference>
<dbReference type="InterPro" id="IPR005227">
    <property type="entry name" value="YqgF"/>
</dbReference>
<dbReference type="InterPro" id="IPR006641">
    <property type="entry name" value="YqgF/RNaseH-like_dom"/>
</dbReference>
<dbReference type="InterPro" id="IPR037027">
    <property type="entry name" value="YqgF/RNaseH-like_dom_sf"/>
</dbReference>
<dbReference type="NCBIfam" id="TIGR00250">
    <property type="entry name" value="RNAse_H_YqgF"/>
    <property type="match status" value="1"/>
</dbReference>
<dbReference type="PANTHER" id="PTHR33317">
    <property type="entry name" value="POLYNUCLEOTIDYL TRANSFERASE, RIBONUCLEASE H-LIKE SUPERFAMILY PROTEIN"/>
    <property type="match status" value="1"/>
</dbReference>
<dbReference type="PANTHER" id="PTHR33317:SF4">
    <property type="entry name" value="POLYNUCLEOTIDYL TRANSFERASE, RIBONUCLEASE H-LIKE SUPERFAMILY PROTEIN"/>
    <property type="match status" value="1"/>
</dbReference>
<dbReference type="Pfam" id="PF03652">
    <property type="entry name" value="RuvX"/>
    <property type="match status" value="1"/>
</dbReference>
<dbReference type="SMART" id="SM00732">
    <property type="entry name" value="YqgFc"/>
    <property type="match status" value="1"/>
</dbReference>
<dbReference type="SUPFAM" id="SSF53098">
    <property type="entry name" value="Ribonuclease H-like"/>
    <property type="match status" value="1"/>
</dbReference>
<comment type="function">
    <text evidence="1">Could be a nuclease involved in processing of the 5'-end of pre-16S rRNA.</text>
</comment>
<comment type="subcellular location">
    <subcellularLocation>
        <location evidence="1">Cytoplasm</location>
    </subcellularLocation>
</comment>
<comment type="similarity">
    <text evidence="1">Belongs to the YqgF nuclease family.</text>
</comment>